<evidence type="ECO:0000250" key="1"/>
<evidence type="ECO:0000255" key="2">
    <source>
        <dbReference type="PROSITE-ProRule" id="PRU00177"/>
    </source>
</evidence>
<evidence type="ECO:0000255" key="3">
    <source>
        <dbReference type="PROSITE-ProRule" id="PRU00541"/>
    </source>
</evidence>
<evidence type="ECO:0000255" key="4">
    <source>
        <dbReference type="PROSITE-ProRule" id="PRU00542"/>
    </source>
</evidence>
<evidence type="ECO:0000255" key="5">
    <source>
        <dbReference type="PROSITE-ProRule" id="PRU00657"/>
    </source>
</evidence>
<keyword id="KW-0051">Antiviral defense</keyword>
<keyword id="KW-0930">Antiviral protein</keyword>
<keyword id="KW-0067">ATP-binding</keyword>
<keyword id="KW-0347">Helicase</keyword>
<keyword id="KW-0378">Hydrolase</keyword>
<keyword id="KW-0460">Magnesium</keyword>
<keyword id="KW-0464">Manganese</keyword>
<keyword id="KW-0479">Metal-binding</keyword>
<keyword id="KW-0547">Nucleotide-binding</keyword>
<keyword id="KW-1185">Reference proteome</keyword>
<keyword id="KW-0677">Repeat</keyword>
<keyword id="KW-0694">RNA-binding</keyword>
<sequence length="1435" mass="162531">MSAHTTAEQSPKRRRIHLDNDSKMHFSSILEDGTSKSQEALLPPRRARGYQLEMLSESLRQNIIVAMDTGSGKTEIAILRIQRELERCPAHKFVWFMAPTVALVEQQHSAISKQLPAFQTRLLTGAANVSHWSTKKIWDDILLNIRIVISTPQVLLDALSNGFVDLHTISLLVFDEAHHCVRDAPANRIMRDFYHYHRQEEGTDGLPHILGLTASPTTRARQTDLEVLEINLNAVCVTPKMHREEMMQFVHMPEYRSIEYQPDVQNFSSIVEKLSVIINELDIENDPFVKFMRRRNDLKSRQRLLDALENKKTPCLDQLKRCLRRSRVIHRELGPWASERFLTRCIMGLKSKQTNASGPQWADWDREDNSYMLNVLSQVVSSTEMGVQNPPDELSRKVHKLIDFLVLEHVNGSIGIVFAEERTIVIMLAQLLSLHPRTKHIKTTAFLGSSASVSRKSDITELHNPIDQSTAIDDLRTGKKDLIIATAVLEEGIDVPICDLVICFDLPKDLRSFIQRRGRARKKGSKFALFLHSEDRATSSELHLMEKTMKQLYLENKRALEHIQYLENVEEEGYDGFRVASTGALLTLSNARNHLSHFCGTLSAEFIATDPEFVLEGDDTTGFSAKVILPSFLDPKLREFRGILLWKTEKMAKRDASFQAYVALYEAGLVNDYLMPAHHHIDDEDGLEQVEKRPSFAKALGSLNPWAAIAKKWREAKHFYQNLIEISAGAQAFPPMVMVLPVELPCDISFRLFWNEHSTLLVSVKRGGQDFAADLIRLAADTTSILLSSLFSQKMVPGSLDFSWLFLPQMESIPSAIREWCDSVTGTISLHDIRDCDMAGFENPGLVRPMDNTARPCTFEKLVWRKYVPAETSDGASLSEQVTYDREVPHIEGRVWPKRTDFLHRLEPSNTSKAHHTAKCFYPANNCSVDRLPVEYSQFALFIPCLIHSIENYFIANELAQTILHPVGFSNLSLVLTAISSSAAREASNYQRLEFLGDSLLKLHTSIQLAADHPLWPEGRLTMRKGNIVSNGYLANAALQTGLDKFILTKPFTGAKWRPSYNTDHINTGDMTEPTREMSTKVLADVVEALIGAANIDGGENKILNCLKIFIPDIKWSPLNECVNILHHQEDSFSDENNNMLSEIEGLVGYTFKKKPLLLAAVTHPSSKGSGHSYQRLEFVGDSILDIIVVQELFESPRCFHHFDMHLMRTALVNADFLAFLCMNAYREEDRGEAVENSKRRVTVAMTKRRAYLWGFMKHSASWDIVNAQQRAAKQYEKLHEEIDEKLRSSKTYPWTLLCRLDAAKFFSDIVESILGAIFIDSQGSMPACRIFLERIGLIPYLKRVLSEDLDLMHPKERLGLLAGTLSVKYETKRTQGVEPQRWECAARVGDEEVVRVDCRVSRVDAETTAAEAAVAILKTRKLQSEASNKVAECD</sequence>
<feature type="chain" id="PRO_0000306791" description="Dicer-like protein 2">
    <location>
        <begin position="1"/>
        <end position="1435"/>
    </location>
</feature>
<feature type="domain" description="Helicase ATP-binding" evidence="3">
    <location>
        <begin position="54"/>
        <end position="234"/>
    </location>
</feature>
<feature type="domain" description="Helicase C-terminal" evidence="4">
    <location>
        <begin position="400"/>
        <end position="564"/>
    </location>
</feature>
<feature type="domain" description="Dicer dsRNA-binding fold" evidence="5">
    <location>
        <begin position="591"/>
        <end position="684"/>
    </location>
</feature>
<feature type="domain" description="RNase III 1" evidence="2">
    <location>
        <begin position="956"/>
        <end position="1099"/>
    </location>
</feature>
<feature type="domain" description="RNase III 2" evidence="2">
    <location>
        <begin position="1141"/>
        <end position="1323"/>
    </location>
</feature>
<feature type="short sequence motif" description="DEAH box">
    <location>
        <begin position="175"/>
        <end position="178"/>
    </location>
</feature>
<feature type="binding site" evidence="3">
    <location>
        <begin position="67"/>
        <end position="74"/>
    </location>
    <ligand>
        <name>ATP</name>
        <dbReference type="ChEBI" id="CHEBI:30616"/>
    </ligand>
</feature>
<feature type="binding site" evidence="1">
    <location>
        <position position="1178"/>
    </location>
    <ligand>
        <name>Mg(2+)</name>
        <dbReference type="ChEBI" id="CHEBI:18420"/>
    </ligand>
</feature>
<feature type="binding site" evidence="1">
    <location>
        <position position="1309"/>
    </location>
    <ligand>
        <name>Mg(2+)</name>
        <dbReference type="ChEBI" id="CHEBI:18420"/>
    </ligand>
</feature>
<feature type="binding site" evidence="1">
    <location>
        <position position="1312"/>
    </location>
    <ligand>
        <name>Mg(2+)</name>
        <dbReference type="ChEBI" id="CHEBI:18420"/>
    </ligand>
</feature>
<feature type="site" description="Important for activity" evidence="1">
    <location>
        <position position="1305"/>
    </location>
</feature>
<proteinExistence type="inferred from homology"/>
<organism>
    <name type="scientific">Coccidioides immitis (strain RS)</name>
    <name type="common">Valley fever fungus</name>
    <dbReference type="NCBI Taxonomy" id="246410"/>
    <lineage>
        <taxon>Eukaryota</taxon>
        <taxon>Fungi</taxon>
        <taxon>Dikarya</taxon>
        <taxon>Ascomycota</taxon>
        <taxon>Pezizomycotina</taxon>
        <taxon>Eurotiomycetes</taxon>
        <taxon>Eurotiomycetidae</taxon>
        <taxon>Onygenales</taxon>
        <taxon>Onygenaceae</taxon>
        <taxon>Coccidioides</taxon>
    </lineage>
</organism>
<accession>Q1DW80</accession>
<accession>J3KG17</accession>
<name>DCL2_COCIM</name>
<dbReference type="EC" id="3.1.26.-"/>
<dbReference type="EC" id="3.6.4.-"/>
<dbReference type="EMBL" id="GG704914">
    <property type="protein sequence ID" value="EAS34409.3"/>
    <property type="molecule type" value="Genomic_DNA"/>
</dbReference>
<dbReference type="RefSeq" id="XP_001245992.2">
    <property type="nucleotide sequence ID" value="XM_001245991.2"/>
</dbReference>
<dbReference type="STRING" id="246410.Q1DW80"/>
<dbReference type="GeneID" id="4562885"/>
<dbReference type="KEGG" id="cim:CIMG_05433"/>
<dbReference type="VEuPathDB" id="FungiDB:CIMG_05433"/>
<dbReference type="InParanoid" id="Q1DW80"/>
<dbReference type="OMA" id="HFCAVIP"/>
<dbReference type="OrthoDB" id="416741at2759"/>
<dbReference type="Proteomes" id="UP000001261">
    <property type="component" value="Unassembled WGS sequence"/>
</dbReference>
<dbReference type="GO" id="GO:0005737">
    <property type="term" value="C:cytoplasm"/>
    <property type="evidence" value="ECO:0007669"/>
    <property type="project" value="TreeGrafter"/>
</dbReference>
<dbReference type="GO" id="GO:0005634">
    <property type="term" value="C:nucleus"/>
    <property type="evidence" value="ECO:0007669"/>
    <property type="project" value="TreeGrafter"/>
</dbReference>
<dbReference type="GO" id="GO:0005524">
    <property type="term" value="F:ATP binding"/>
    <property type="evidence" value="ECO:0007669"/>
    <property type="project" value="UniProtKB-KW"/>
</dbReference>
<dbReference type="GO" id="GO:0004386">
    <property type="term" value="F:helicase activity"/>
    <property type="evidence" value="ECO:0007669"/>
    <property type="project" value="UniProtKB-KW"/>
</dbReference>
<dbReference type="GO" id="GO:0046872">
    <property type="term" value="F:metal ion binding"/>
    <property type="evidence" value="ECO:0007669"/>
    <property type="project" value="UniProtKB-KW"/>
</dbReference>
<dbReference type="GO" id="GO:0004525">
    <property type="term" value="F:ribonuclease III activity"/>
    <property type="evidence" value="ECO:0007669"/>
    <property type="project" value="InterPro"/>
</dbReference>
<dbReference type="GO" id="GO:0003723">
    <property type="term" value="F:RNA binding"/>
    <property type="evidence" value="ECO:0007669"/>
    <property type="project" value="UniProtKB-KW"/>
</dbReference>
<dbReference type="GO" id="GO:0051607">
    <property type="term" value="P:defense response to virus"/>
    <property type="evidence" value="ECO:0007669"/>
    <property type="project" value="UniProtKB-KW"/>
</dbReference>
<dbReference type="GO" id="GO:0050688">
    <property type="term" value="P:regulation of defense response to virus"/>
    <property type="evidence" value="ECO:0007669"/>
    <property type="project" value="UniProtKB-KW"/>
</dbReference>
<dbReference type="GO" id="GO:0030422">
    <property type="term" value="P:siRNA processing"/>
    <property type="evidence" value="ECO:0007669"/>
    <property type="project" value="TreeGrafter"/>
</dbReference>
<dbReference type="CDD" id="cd18034">
    <property type="entry name" value="DEXHc_dicer"/>
    <property type="match status" value="1"/>
</dbReference>
<dbReference type="CDD" id="cd00593">
    <property type="entry name" value="RIBOc"/>
    <property type="match status" value="2"/>
</dbReference>
<dbReference type="CDD" id="cd18802">
    <property type="entry name" value="SF2_C_dicer"/>
    <property type="match status" value="1"/>
</dbReference>
<dbReference type="FunFam" id="1.10.1520.10:FF:000032">
    <property type="entry name" value="Dicer-like protein 2"/>
    <property type="match status" value="1"/>
</dbReference>
<dbReference type="Gene3D" id="3.30.160.380">
    <property type="entry name" value="Dicer dimerisation domain"/>
    <property type="match status" value="1"/>
</dbReference>
<dbReference type="Gene3D" id="3.40.50.300">
    <property type="entry name" value="P-loop containing nucleotide triphosphate hydrolases"/>
    <property type="match status" value="2"/>
</dbReference>
<dbReference type="Gene3D" id="1.10.1520.10">
    <property type="entry name" value="Ribonuclease III domain"/>
    <property type="match status" value="2"/>
</dbReference>
<dbReference type="InterPro" id="IPR011545">
    <property type="entry name" value="DEAD/DEAH_box_helicase_dom"/>
</dbReference>
<dbReference type="InterPro" id="IPR038248">
    <property type="entry name" value="Dicer_dimer_sf"/>
</dbReference>
<dbReference type="InterPro" id="IPR005034">
    <property type="entry name" value="Dicer_dimerisation_dom"/>
</dbReference>
<dbReference type="InterPro" id="IPR014001">
    <property type="entry name" value="Helicase_ATP-bd"/>
</dbReference>
<dbReference type="InterPro" id="IPR001650">
    <property type="entry name" value="Helicase_C-like"/>
</dbReference>
<dbReference type="InterPro" id="IPR027417">
    <property type="entry name" value="P-loop_NTPase"/>
</dbReference>
<dbReference type="InterPro" id="IPR000999">
    <property type="entry name" value="RNase_III_dom"/>
</dbReference>
<dbReference type="InterPro" id="IPR036389">
    <property type="entry name" value="RNase_III_sf"/>
</dbReference>
<dbReference type="PANTHER" id="PTHR14950">
    <property type="entry name" value="DICER-RELATED"/>
    <property type="match status" value="1"/>
</dbReference>
<dbReference type="PANTHER" id="PTHR14950:SF37">
    <property type="entry name" value="ENDORIBONUCLEASE DICER"/>
    <property type="match status" value="1"/>
</dbReference>
<dbReference type="Pfam" id="PF00270">
    <property type="entry name" value="DEAD"/>
    <property type="match status" value="1"/>
</dbReference>
<dbReference type="Pfam" id="PF03368">
    <property type="entry name" value="Dicer_dimer"/>
    <property type="match status" value="1"/>
</dbReference>
<dbReference type="Pfam" id="PF00271">
    <property type="entry name" value="Helicase_C"/>
    <property type="match status" value="1"/>
</dbReference>
<dbReference type="Pfam" id="PF00636">
    <property type="entry name" value="Ribonuclease_3"/>
    <property type="match status" value="2"/>
</dbReference>
<dbReference type="SMART" id="SM00487">
    <property type="entry name" value="DEXDc"/>
    <property type="match status" value="1"/>
</dbReference>
<dbReference type="SMART" id="SM00490">
    <property type="entry name" value="HELICc"/>
    <property type="match status" value="1"/>
</dbReference>
<dbReference type="SMART" id="SM00535">
    <property type="entry name" value="RIBOc"/>
    <property type="match status" value="2"/>
</dbReference>
<dbReference type="SUPFAM" id="SSF52540">
    <property type="entry name" value="P-loop containing nucleoside triphosphate hydrolases"/>
    <property type="match status" value="1"/>
</dbReference>
<dbReference type="SUPFAM" id="SSF69065">
    <property type="entry name" value="RNase III domain-like"/>
    <property type="match status" value="2"/>
</dbReference>
<dbReference type="PROSITE" id="PS51327">
    <property type="entry name" value="DICER_DSRBF"/>
    <property type="match status" value="1"/>
</dbReference>
<dbReference type="PROSITE" id="PS51192">
    <property type="entry name" value="HELICASE_ATP_BIND_1"/>
    <property type="match status" value="1"/>
</dbReference>
<dbReference type="PROSITE" id="PS51194">
    <property type="entry name" value="HELICASE_CTER"/>
    <property type="match status" value="1"/>
</dbReference>
<dbReference type="PROSITE" id="PS00517">
    <property type="entry name" value="RNASE_3_1"/>
    <property type="match status" value="2"/>
</dbReference>
<dbReference type="PROSITE" id="PS50142">
    <property type="entry name" value="RNASE_3_2"/>
    <property type="match status" value="2"/>
</dbReference>
<reference key="1">
    <citation type="journal article" date="2009" name="Genome Res.">
        <title>Comparative genomic analyses of the human fungal pathogens Coccidioides and their relatives.</title>
        <authorList>
            <person name="Sharpton T.J."/>
            <person name="Stajich J.E."/>
            <person name="Rounsley S.D."/>
            <person name="Gardner M.J."/>
            <person name="Wortman J.R."/>
            <person name="Jordar V.S."/>
            <person name="Maiti R."/>
            <person name="Kodira C.D."/>
            <person name="Neafsey D.E."/>
            <person name="Zeng Q."/>
            <person name="Hung C.-Y."/>
            <person name="McMahan C."/>
            <person name="Muszewska A."/>
            <person name="Grynberg M."/>
            <person name="Mandel M.A."/>
            <person name="Kellner E.M."/>
            <person name="Barker B.M."/>
            <person name="Galgiani J.N."/>
            <person name="Orbach M.J."/>
            <person name="Kirkland T.N."/>
            <person name="Cole G.T."/>
            <person name="Henn M.R."/>
            <person name="Birren B.W."/>
            <person name="Taylor J.W."/>
        </authorList>
    </citation>
    <scope>NUCLEOTIDE SEQUENCE [LARGE SCALE GENOMIC DNA]</scope>
    <source>
        <strain>RS</strain>
    </source>
</reference>
<reference key="2">
    <citation type="journal article" date="2010" name="Genome Res.">
        <title>Population genomic sequencing of Coccidioides fungi reveals recent hybridization and transposon control.</title>
        <authorList>
            <person name="Neafsey D.E."/>
            <person name="Barker B.M."/>
            <person name="Sharpton T.J."/>
            <person name="Stajich J.E."/>
            <person name="Park D.J."/>
            <person name="Whiston E."/>
            <person name="Hung C.-Y."/>
            <person name="McMahan C."/>
            <person name="White J."/>
            <person name="Sykes S."/>
            <person name="Heiman D."/>
            <person name="Young S."/>
            <person name="Zeng Q."/>
            <person name="Abouelleil A."/>
            <person name="Aftuck L."/>
            <person name="Bessette D."/>
            <person name="Brown A."/>
            <person name="FitzGerald M."/>
            <person name="Lui A."/>
            <person name="Macdonald J.P."/>
            <person name="Priest M."/>
            <person name="Orbach M.J."/>
            <person name="Galgiani J.N."/>
            <person name="Kirkland T.N."/>
            <person name="Cole G.T."/>
            <person name="Birren B.W."/>
            <person name="Henn M.R."/>
            <person name="Taylor J.W."/>
            <person name="Rounsley S.D."/>
        </authorList>
    </citation>
    <scope>GENOME REANNOTATION</scope>
    <source>
        <strain>RS</strain>
    </source>
</reference>
<gene>
    <name type="primary">DCL2</name>
    <name type="ORF">CIMG_05433</name>
</gene>
<protein>
    <recommendedName>
        <fullName>Dicer-like protein 2</fullName>
    </recommendedName>
    <domain>
        <recommendedName>
            <fullName>Endoribonuclease DCL2</fullName>
            <ecNumber>3.1.26.-</ecNumber>
        </recommendedName>
    </domain>
    <domain>
        <recommendedName>
            <fullName>ATP-dependent helicase DCL2</fullName>
            <ecNumber>3.6.4.-</ecNumber>
        </recommendedName>
    </domain>
</protein>
<comment type="function">
    <text evidence="1">Dicer-like endonuclease involved in cleaving double-stranded RNA in the RNA interference (RNAi) pathway. Produces 21 to 25 bp dsRNAs (siRNAs) which target the selective destruction of homologous RNAs leading to sequence-specific suppression of gene expression, called post-transcriptional gene silencing (PTGS). Part of a broad host defense response against viral infection and transposons (By similarity).</text>
</comment>
<comment type="cofactor">
    <cofactor evidence="1">
        <name>Mg(2+)</name>
        <dbReference type="ChEBI" id="CHEBI:18420"/>
    </cofactor>
    <cofactor evidence="1">
        <name>Mn(2+)</name>
        <dbReference type="ChEBI" id="CHEBI:29035"/>
    </cofactor>
</comment>
<comment type="similarity">
    <text evidence="5">Belongs to the helicase family. Dicer subfamily.</text>
</comment>